<accession>K1XVG1</accession>
<gene>
    <name evidence="5" type="primary">CFEM1</name>
    <name evidence="7" type="ORF">MBM_05118</name>
</gene>
<proteinExistence type="evidence at transcript level"/>
<comment type="function">
    <text evidence="4">Appears to function during host infection, and may play a role in suppressing the host immune response.</text>
</comment>
<comment type="subcellular location">
    <subcellularLocation>
        <location evidence="2">Cell membrane</location>
        <topology evidence="2">Lipid-anchor</topology>
        <topology evidence="2">GPI-anchor</topology>
    </subcellularLocation>
    <subcellularLocation>
        <location evidence="4">Secreted</location>
    </subcellularLocation>
    <subcellularLocation>
        <location evidence="4">Host cytoplasm</location>
    </subcellularLocation>
    <subcellularLocation>
        <location evidence="4">Host nucleus</location>
    </subcellularLocation>
    <subcellularLocation>
        <location evidence="4">Host cell membrane</location>
    </subcellularLocation>
</comment>
<comment type="induction">
    <text evidence="4">Induced during infection of poplar leaves, with highest expression observed four days post inoculation.</text>
</comment>
<comment type="domain">
    <text evidence="1">The CFEM domain is involved in heme-binding and contains 8 cysteines and is found in proteins from several pathogenic fungi, including both human and plant pathogens (By similarity). The CFEM domain adopts a novel helical-basket fold that consists of six alpha-helices, and is uniquely stabilized by four disulfide bonds formed by its 8 signature cysteines (By similarity).</text>
</comment>
<comment type="similarity">
    <text evidence="6">Belongs to the RBT5 family.</text>
</comment>
<feature type="signal peptide" evidence="2">
    <location>
        <begin position="1"/>
        <end position="17"/>
    </location>
</feature>
<feature type="chain" id="PRO_5003855649" description="Effector CFEM1" evidence="2">
    <location>
        <begin position="18"/>
        <end position="211"/>
    </location>
</feature>
<feature type="propeptide" id="PRO_0000457866" description="Removed in mature form" evidence="2">
    <location>
        <begin position="212"/>
        <end position="235"/>
    </location>
</feature>
<feature type="domain" description="CFEM" evidence="3">
    <location>
        <begin position="18"/>
        <end position="114"/>
    </location>
</feature>
<feature type="binding site" description="axial binding residue" evidence="3">
    <location>
        <position position="48"/>
    </location>
    <ligand>
        <name>heme</name>
        <dbReference type="ChEBI" id="CHEBI:30413"/>
    </ligand>
    <ligandPart>
        <name>Fe</name>
        <dbReference type="ChEBI" id="CHEBI:18248"/>
    </ligandPart>
</feature>
<feature type="lipid moiety-binding region" description="GPI-anchor amidated threonine" evidence="2">
    <location>
        <position position="211"/>
    </location>
</feature>
<feature type="disulfide bond" evidence="3">
    <location>
        <begin position="30"/>
        <end position="72"/>
    </location>
</feature>
<feature type="disulfide bond" evidence="3">
    <location>
        <begin position="34"/>
        <end position="67"/>
    </location>
</feature>
<feature type="disulfide bond" evidence="3">
    <location>
        <begin position="44"/>
        <end position="51"/>
    </location>
</feature>
<feature type="disulfide bond" evidence="3">
    <location>
        <begin position="53"/>
        <end position="88"/>
    </location>
</feature>
<feature type="sequence conflict" description="In Ref. 1; no nucleotide entry." evidence="6" ref="1">
    <original>S</original>
    <variation>SSASA</variation>
    <location>
        <position position="103"/>
    </location>
</feature>
<feature type="sequence conflict" description="In Ref. 1; no nucleotide entry." evidence="6" ref="1">
    <original>SSASSASAAASALTLAHPIPNPSHPPSPTIQTNLRKKVRNSNRLTP</original>
    <variation>ASASSSASSASAAAS</variation>
    <location>
        <begin position="128"/>
        <end position="173"/>
    </location>
</feature>
<feature type="sequence conflict" description="In Ref. 1; no nucleotide entry." evidence="6" ref="1">
    <original>V</original>
    <variation>A</variation>
    <location>
        <position position="227"/>
    </location>
</feature>
<evidence type="ECO:0000250" key="1">
    <source>
        <dbReference type="UniProtKB" id="Q5A0X8"/>
    </source>
</evidence>
<evidence type="ECO:0000255" key="2"/>
<evidence type="ECO:0000255" key="3">
    <source>
        <dbReference type="PROSITE-ProRule" id="PRU01356"/>
    </source>
</evidence>
<evidence type="ECO:0000269" key="4">
    <source>
    </source>
</evidence>
<evidence type="ECO:0000303" key="5">
    <source>
    </source>
</evidence>
<evidence type="ECO:0000305" key="6"/>
<evidence type="ECO:0000312" key="7">
    <source>
        <dbReference type="EMBL" id="EKD16649.1"/>
    </source>
</evidence>
<evidence type="ECO:0000312" key="8">
    <source>
        <dbReference type="Proteomes" id="UP000006753"/>
    </source>
</evidence>
<organism evidence="8">
    <name type="scientific">Marssonina brunnea f. sp. multigermtubi (strain MB_m1)</name>
    <name type="common">Marssonina leaf spot fungus</name>
    <dbReference type="NCBI Taxonomy" id="1072389"/>
    <lineage>
        <taxon>Eukaryota</taxon>
        <taxon>Fungi</taxon>
        <taxon>Dikarya</taxon>
        <taxon>Ascomycota</taxon>
        <taxon>Pezizomycotina</taxon>
        <taxon>Leotiomycetes</taxon>
        <taxon>Helotiales</taxon>
        <taxon>Drepanopezizaceae</taxon>
        <taxon>Drepanopeziza</taxon>
    </lineage>
</organism>
<name>CFM1_MARBU</name>
<reference evidence="6" key="1">
    <citation type="journal article" date="2022" name="Front. Cell. Infect. Microbiol.">
        <title>Systematic identification and functional characterization of the CFEM proteins in poplar fungus Marssonina brunnea.</title>
        <authorList>
            <person name="Qian Y."/>
            <person name="Zheng X."/>
            <person name="Wang X."/>
            <person name="Yang J."/>
            <person name="Zheng X."/>
            <person name="Zeng Q."/>
            <person name="Li J."/>
            <person name="Zhuge Q."/>
            <person name="Xiong Q."/>
        </authorList>
    </citation>
    <scope>NUCLEOTIDE SEQUENCE [MRNA]</scope>
    <scope>FUNCTION</scope>
    <scope>SUBCELLULAR LOCATION</scope>
    <scope>INDUCTION</scope>
    <source>
        <strain evidence="5">J4</strain>
    </source>
</reference>
<reference evidence="8" key="2">
    <citation type="journal article" date="2012" name="BMC Genomics">
        <title>Sequencing the genome of Marssonina brunnea reveals fungus-poplar co-evolution.</title>
        <authorList>
            <person name="Zhu S."/>
            <person name="Cao Y.-Z."/>
            <person name="Jiang C."/>
            <person name="Tan B.-Y."/>
            <person name="Wang Z."/>
            <person name="Feng S."/>
            <person name="Zhang L."/>
            <person name="Su X.-H."/>
            <person name="Brejova B."/>
            <person name="Vinar T."/>
            <person name="Xu M."/>
            <person name="Wang M.-X."/>
            <person name="Zhang S.-G."/>
            <person name="Huang M.-R."/>
            <person name="Wu R."/>
            <person name="Zhou Y."/>
        </authorList>
    </citation>
    <scope>NUCLEOTIDE SEQUENCE [LARGE SCALE GENOMIC DNA]</scope>
    <source>
        <strain evidence="8">MB_m1</strain>
    </source>
</reference>
<dbReference type="EMBL" id="JH921438">
    <property type="protein sequence ID" value="EKD16649.1"/>
    <property type="molecule type" value="Genomic_DNA"/>
</dbReference>
<dbReference type="RefSeq" id="XP_007293007.1">
    <property type="nucleotide sequence ID" value="XM_007292945.1"/>
</dbReference>
<dbReference type="SMR" id="K1XVG1"/>
<dbReference type="KEGG" id="mbe:MBM_05118"/>
<dbReference type="eggNOG" id="ENOG502SD7M">
    <property type="taxonomic scope" value="Eukaryota"/>
</dbReference>
<dbReference type="HOGENOM" id="CLU_1180444_0_0_1"/>
<dbReference type="InParanoid" id="K1XVG1"/>
<dbReference type="OMA" id="DIADCAM"/>
<dbReference type="OrthoDB" id="3767534at2759"/>
<dbReference type="Proteomes" id="UP000006753">
    <property type="component" value="Unassembled WGS sequence"/>
</dbReference>
<dbReference type="GO" id="GO:0005615">
    <property type="term" value="C:extracellular space"/>
    <property type="evidence" value="ECO:0000314"/>
    <property type="project" value="UniProtKB"/>
</dbReference>
<dbReference type="GO" id="GO:0030430">
    <property type="term" value="C:host cell cytoplasm"/>
    <property type="evidence" value="ECO:0007669"/>
    <property type="project" value="UniProtKB-SubCell"/>
</dbReference>
<dbReference type="GO" id="GO:0042025">
    <property type="term" value="C:host cell nucleus"/>
    <property type="evidence" value="ECO:0000314"/>
    <property type="project" value="UniProtKB"/>
</dbReference>
<dbReference type="GO" id="GO:0020002">
    <property type="term" value="C:host cell plasma membrane"/>
    <property type="evidence" value="ECO:0000314"/>
    <property type="project" value="UniProtKB"/>
</dbReference>
<dbReference type="GO" id="GO:0005886">
    <property type="term" value="C:plasma membrane"/>
    <property type="evidence" value="ECO:0007669"/>
    <property type="project" value="UniProtKB-SubCell"/>
</dbReference>
<dbReference type="GO" id="GO:0098552">
    <property type="term" value="C:side of membrane"/>
    <property type="evidence" value="ECO:0007669"/>
    <property type="project" value="UniProtKB-KW"/>
</dbReference>
<dbReference type="GO" id="GO:0046872">
    <property type="term" value="F:metal ion binding"/>
    <property type="evidence" value="ECO:0007669"/>
    <property type="project" value="UniProtKB-KW"/>
</dbReference>
<dbReference type="GO" id="GO:0051701">
    <property type="term" value="P:biological process involved in interaction with host"/>
    <property type="evidence" value="ECO:0000314"/>
    <property type="project" value="UniProtKB"/>
</dbReference>
<dbReference type="InterPro" id="IPR008427">
    <property type="entry name" value="Extracellular_membr_CFEM_dom"/>
</dbReference>
<dbReference type="Pfam" id="PF05730">
    <property type="entry name" value="CFEM"/>
    <property type="match status" value="1"/>
</dbReference>
<dbReference type="SMART" id="SM00747">
    <property type="entry name" value="CFEM"/>
    <property type="match status" value="1"/>
</dbReference>
<dbReference type="PROSITE" id="PS52012">
    <property type="entry name" value="CFEM"/>
    <property type="match status" value="1"/>
</dbReference>
<keyword id="KW-1003">Cell membrane</keyword>
<keyword id="KW-1015">Disulfide bond</keyword>
<keyword id="KW-0325">Glycoprotein</keyword>
<keyword id="KW-0336">GPI-anchor</keyword>
<keyword id="KW-0349">Heme</keyword>
<keyword id="KW-1032">Host cell membrane</keyword>
<keyword id="KW-1035">Host cytoplasm</keyword>
<keyword id="KW-1043">Host membrane</keyword>
<keyword id="KW-1048">Host nucleus</keyword>
<keyword id="KW-0408">Iron</keyword>
<keyword id="KW-0449">Lipoprotein</keyword>
<keyword id="KW-0472">Membrane</keyword>
<keyword id="KW-0479">Metal-binding</keyword>
<keyword id="KW-1185">Reference proteome</keyword>
<keyword id="KW-0964">Secreted</keyword>
<keyword id="KW-0732">Signal</keyword>
<keyword id="KW-0843">Virulence</keyword>
<protein>
    <recommendedName>
        <fullName evidence="5">Effector CFEM1</fullName>
    </recommendedName>
    <alternativeName>
        <fullName evidence="5">MbCFEM1</fullName>
    </alternativeName>
</protein>
<sequence length="235" mass="22460">MKFSAPVLAIFLASASAQSTAELAAQIPSCAQTCLATAITGAGCTAGDYACQCGTSQNTITASATPCVISACTSEEALNTQRTTSQICALVAAGSASSPSASSSASASASSSASSTSGAASASASASSSASSASAAASALTLAHPIPNPSHPPSPTIQTNLRKKVRNSNRLTPASLSSVSSALVSSASSVRASASSAVSAATTAANPAATTAAGVKEEASFFIPAAVALFAVFAV</sequence>